<protein>
    <recommendedName>
        <fullName evidence="1">Maintenance of mitochondrial morphology protein 1</fullName>
    </recommendedName>
</protein>
<feature type="chain" id="PRO_0000384244" description="Maintenance of mitochondrial morphology protein 1">
    <location>
        <begin position="1"/>
        <end position="486"/>
    </location>
</feature>
<feature type="topological domain" description="Lumenal" evidence="1">
    <location>
        <begin position="1"/>
        <end position="23"/>
    </location>
</feature>
<feature type="transmembrane region" description="Helical" evidence="1">
    <location>
        <begin position="24"/>
        <end position="44"/>
    </location>
</feature>
<feature type="topological domain" description="Cytoplasmic" evidence="1">
    <location>
        <begin position="45"/>
        <end position="486"/>
    </location>
</feature>
<feature type="domain" description="SMP-LTD" evidence="1">
    <location>
        <begin position="140"/>
        <end position="389"/>
    </location>
</feature>
<feature type="region of interest" description="Disordered" evidence="2">
    <location>
        <begin position="52"/>
        <end position="103"/>
    </location>
</feature>
<feature type="region of interest" description="Disordered" evidence="2">
    <location>
        <begin position="413"/>
        <end position="486"/>
    </location>
</feature>
<feature type="compositionally biased region" description="Low complexity" evidence="2">
    <location>
        <begin position="67"/>
        <end position="84"/>
    </location>
</feature>
<feature type="compositionally biased region" description="Polar residues" evidence="2">
    <location>
        <begin position="92"/>
        <end position="103"/>
    </location>
</feature>
<feature type="compositionally biased region" description="Low complexity" evidence="2">
    <location>
        <begin position="413"/>
        <end position="426"/>
    </location>
</feature>
<reference key="1">
    <citation type="journal article" date="2015" name="Genome Announc.">
        <title>Genome sequence of the AIDS-associated pathogen Penicillium marneffei (ATCC18224) and its near taxonomic relative Talaromyces stipitatus (ATCC10500).</title>
        <authorList>
            <person name="Nierman W.C."/>
            <person name="Fedorova-Abrams N.D."/>
            <person name="Andrianopoulos A."/>
        </authorList>
    </citation>
    <scope>NUCLEOTIDE SEQUENCE [LARGE SCALE GENOMIC DNA]</scope>
    <source>
        <strain>ATCC 18224 / CBS 334.59 / QM 7333</strain>
    </source>
</reference>
<name>MMM1_TALMQ</name>
<accession>B6QVB2</accession>
<gene>
    <name evidence="1" type="primary">mmm1</name>
    <name type="ORF">PMAA_011910</name>
</gene>
<organism>
    <name type="scientific">Talaromyces marneffei (strain ATCC 18224 / CBS 334.59 / QM 7333)</name>
    <name type="common">Penicillium marneffei</name>
    <dbReference type="NCBI Taxonomy" id="441960"/>
    <lineage>
        <taxon>Eukaryota</taxon>
        <taxon>Fungi</taxon>
        <taxon>Dikarya</taxon>
        <taxon>Ascomycota</taxon>
        <taxon>Pezizomycotina</taxon>
        <taxon>Eurotiomycetes</taxon>
        <taxon>Eurotiomycetidae</taxon>
        <taxon>Eurotiales</taxon>
        <taxon>Trichocomaceae</taxon>
        <taxon>Talaromyces</taxon>
        <taxon>Talaromyces sect. Talaromyces</taxon>
    </lineage>
</organism>
<keyword id="KW-0256">Endoplasmic reticulum</keyword>
<keyword id="KW-0445">Lipid transport</keyword>
<keyword id="KW-0446">Lipid-binding</keyword>
<keyword id="KW-0472">Membrane</keyword>
<keyword id="KW-1185">Reference proteome</keyword>
<keyword id="KW-0812">Transmembrane</keyword>
<keyword id="KW-1133">Transmembrane helix</keyword>
<keyword id="KW-0813">Transport</keyword>
<proteinExistence type="inferred from homology"/>
<evidence type="ECO:0000255" key="1">
    <source>
        <dbReference type="HAMAP-Rule" id="MF_03103"/>
    </source>
</evidence>
<evidence type="ECO:0000256" key="2">
    <source>
        <dbReference type="SAM" id="MobiDB-lite"/>
    </source>
</evidence>
<dbReference type="EMBL" id="DS995906">
    <property type="protein sequence ID" value="EEA18919.1"/>
    <property type="molecule type" value="Genomic_DNA"/>
</dbReference>
<dbReference type="RefSeq" id="XP_002153304.1">
    <property type="nucleotide sequence ID" value="XM_002153268.1"/>
</dbReference>
<dbReference type="SMR" id="B6QVB2"/>
<dbReference type="STRING" id="441960.B6QVB2"/>
<dbReference type="VEuPathDB" id="FungiDB:PMAA_011910"/>
<dbReference type="HOGENOM" id="CLU_032730_1_0_1"/>
<dbReference type="OrthoDB" id="10300at28568"/>
<dbReference type="PhylomeDB" id="B6QVB2"/>
<dbReference type="Proteomes" id="UP000001294">
    <property type="component" value="Unassembled WGS sequence"/>
</dbReference>
<dbReference type="GO" id="GO:0005789">
    <property type="term" value="C:endoplasmic reticulum membrane"/>
    <property type="evidence" value="ECO:0007669"/>
    <property type="project" value="UniProtKB-SubCell"/>
</dbReference>
<dbReference type="GO" id="GO:0032865">
    <property type="term" value="C:ERMES complex"/>
    <property type="evidence" value="ECO:0007669"/>
    <property type="project" value="UniProtKB-UniRule"/>
</dbReference>
<dbReference type="GO" id="GO:0008289">
    <property type="term" value="F:lipid binding"/>
    <property type="evidence" value="ECO:0007669"/>
    <property type="project" value="UniProtKB-KW"/>
</dbReference>
<dbReference type="GO" id="GO:0000002">
    <property type="term" value="P:mitochondrial genome maintenance"/>
    <property type="evidence" value="ECO:0007669"/>
    <property type="project" value="UniProtKB-UniRule"/>
</dbReference>
<dbReference type="GO" id="GO:1990456">
    <property type="term" value="P:mitochondrion-endoplasmic reticulum membrane tethering"/>
    <property type="evidence" value="ECO:0007669"/>
    <property type="project" value="TreeGrafter"/>
</dbReference>
<dbReference type="GO" id="GO:0015914">
    <property type="term" value="P:phospholipid transport"/>
    <property type="evidence" value="ECO:0007669"/>
    <property type="project" value="TreeGrafter"/>
</dbReference>
<dbReference type="GO" id="GO:0045040">
    <property type="term" value="P:protein insertion into mitochondrial outer membrane"/>
    <property type="evidence" value="ECO:0007669"/>
    <property type="project" value="UniProtKB-UniRule"/>
</dbReference>
<dbReference type="CDD" id="cd21671">
    <property type="entry name" value="SMP_Mmm1"/>
    <property type="match status" value="1"/>
</dbReference>
<dbReference type="HAMAP" id="MF_03103">
    <property type="entry name" value="Mmm1"/>
    <property type="match status" value="1"/>
</dbReference>
<dbReference type="InterPro" id="IPR027537">
    <property type="entry name" value="Mmm1"/>
</dbReference>
<dbReference type="InterPro" id="IPR019411">
    <property type="entry name" value="MMM1_dom"/>
</dbReference>
<dbReference type="InterPro" id="IPR031468">
    <property type="entry name" value="SMP_LBD"/>
</dbReference>
<dbReference type="PANTHER" id="PTHR13466:SF0">
    <property type="entry name" value="SMP-LTD DOMAIN-CONTAINING PROTEIN"/>
    <property type="match status" value="1"/>
</dbReference>
<dbReference type="PANTHER" id="PTHR13466">
    <property type="entry name" value="TEX2 PROTEIN-RELATED"/>
    <property type="match status" value="1"/>
</dbReference>
<dbReference type="Pfam" id="PF10296">
    <property type="entry name" value="MMM1"/>
    <property type="match status" value="1"/>
</dbReference>
<dbReference type="PROSITE" id="PS51847">
    <property type="entry name" value="SMP"/>
    <property type="match status" value="1"/>
</dbReference>
<comment type="function">
    <text evidence="1">Component of the ERMES/MDM complex, which serves as a molecular tether to connect the endoplasmic reticulum (ER) and mitochondria. Components of this complex are involved in the control of mitochondrial shape and protein biogenesis, and function in nonvesicular lipid trafficking between the ER and mitochondria. The mdm12-mmm1 subcomplex functions in the major beta-barrel assembly pathway that is responsible for biogenesis of all outer membrane beta-barrel proteins, and acts in a late step after the SAM complex. The mdm10-mdm12-mmm1 subcomplex further acts in the TOM40-specific pathway after the action of the mdm12-mmm1 complex. Essential for establishing and maintaining the structure of mitochondria and maintenance of mtDNA nucleoids.</text>
</comment>
<comment type="subunit">
    <text evidence="1">Homodimer. Component of the ER-mitochondria encounter structure (ERMES) or MDM complex, composed of mmm1, mdm10, mdm12 and mdm34. A mmm1 homodimer associates with one molecule of mdm12 on each side in a pairwise head-to-tail manner, and the SMP-LTD domains of mmm1 and mdm12 generate a continuous hydrophobic tunnel for phospholipid trafficking.</text>
</comment>
<comment type="subcellular location">
    <subcellularLocation>
        <location evidence="1">Endoplasmic reticulum membrane</location>
        <topology evidence="1">Single-pass type I membrane protein</topology>
    </subcellularLocation>
    <text evidence="1">The ERMES/MDM complex localizes to a few discrete foci (around 10 per single cell), that represent mitochondria-endoplasmic reticulum junctions. These foci are often found next to mtDNA nucleoids.</text>
</comment>
<comment type="domain">
    <text evidence="1">The SMP-LTD domain is a barrel-like domain that can bind various types of glycerophospholipids in its interior and mediate their transfer between two adjacent bilayers.</text>
</comment>
<comment type="similarity">
    <text evidence="1">Belongs to the MMM1 family.</text>
</comment>
<sequence length="486" mass="52204">MSQHSQYDAPGVPVQPSLSFTQGFLLGQLSVVLLIGAFIKFFIFGEAPAPPSRGLASRTASHHRSYSINQGDNNVSNNNTSGGSPRTLCEKPSTSNVLRPVPSSATNTRSILRKTYYNAIPTQFSHTKQGRHRIQHSTHQPESLDWFNVLIAQTIAQYRQTAYLLKDSPTSSILDSLSAAINDPQKKPSFIDTIKVTDISLGEEFPIFSNCRVIVVDDPNSDGGRLQALMDVDLSDDNLSLAIETSLILNYPKPRSAVLPVALSVSVVRFSGTLCISLIPAATEQSPSSAPTPDASNLNVRTLFQHISAELNGTAANPTANPEKKGVPKTNLAFSFLPDYRLDLSVRSLIGSRSRLQDVPKVAQLVEARIHSWFEERVVEPRVQVVGLPDFWPRKGRTGVRPGEDAEAAAAVAAASASSRGGAPEATPSVPEEAIIDDSPVRPGLRFRGPAGRYDSGSSFDELPRAGPGLGEPLDIPGSMPGGRAQ</sequence>